<name>RL6_RHOP2</name>
<reference key="1">
    <citation type="submission" date="2006-01" db="EMBL/GenBank/DDBJ databases">
        <title>Complete sequence of Rhodopseudomonas palustris HaA2.</title>
        <authorList>
            <consortium name="US DOE Joint Genome Institute"/>
            <person name="Copeland A."/>
            <person name="Lucas S."/>
            <person name="Lapidus A."/>
            <person name="Barry K."/>
            <person name="Detter J.C."/>
            <person name="Glavina T."/>
            <person name="Hammon N."/>
            <person name="Israni S."/>
            <person name="Pitluck S."/>
            <person name="Chain P."/>
            <person name="Malfatti S."/>
            <person name="Shin M."/>
            <person name="Vergez L."/>
            <person name="Schmutz J."/>
            <person name="Larimer F."/>
            <person name="Land M."/>
            <person name="Hauser L."/>
            <person name="Pelletier D.A."/>
            <person name="Kyrpides N."/>
            <person name="Anderson I."/>
            <person name="Oda Y."/>
            <person name="Harwood C.S."/>
            <person name="Richardson P."/>
        </authorList>
    </citation>
    <scope>NUCLEOTIDE SEQUENCE [LARGE SCALE GENOMIC DNA]</scope>
    <source>
        <strain>HaA2</strain>
    </source>
</reference>
<keyword id="KW-1185">Reference proteome</keyword>
<keyword id="KW-0687">Ribonucleoprotein</keyword>
<keyword id="KW-0689">Ribosomal protein</keyword>
<keyword id="KW-0694">RNA-binding</keyword>
<keyword id="KW-0699">rRNA-binding</keyword>
<accession>Q2IXP5</accession>
<sequence>MSRVGKKPVTVPSGVTASVEGQTVKMKGPKGQLHFVVHDDVDVKFEDGSVKVAPRFETNRAQALYGTARAQIANLVEGVTKGFEKKLEITGVGYRAALQGKKLQLALGYSHDVIYDIPEGITITVPKPTEINVVGIDSQKVGQVAAEIRDYRPPEPYKGKGVRYSDEFIFRKEGKKK</sequence>
<protein>
    <recommendedName>
        <fullName evidence="1">Large ribosomal subunit protein uL6</fullName>
    </recommendedName>
    <alternativeName>
        <fullName evidence="2">50S ribosomal protein L6</fullName>
    </alternativeName>
</protein>
<proteinExistence type="inferred from homology"/>
<comment type="function">
    <text evidence="1">This protein binds to the 23S rRNA, and is important in its secondary structure. It is located near the subunit interface in the base of the L7/L12 stalk, and near the tRNA binding site of the peptidyltransferase center.</text>
</comment>
<comment type="subunit">
    <text evidence="1">Part of the 50S ribosomal subunit.</text>
</comment>
<comment type="similarity">
    <text evidence="1">Belongs to the universal ribosomal protein uL6 family.</text>
</comment>
<organism>
    <name type="scientific">Rhodopseudomonas palustris (strain HaA2)</name>
    <dbReference type="NCBI Taxonomy" id="316058"/>
    <lineage>
        <taxon>Bacteria</taxon>
        <taxon>Pseudomonadati</taxon>
        <taxon>Pseudomonadota</taxon>
        <taxon>Alphaproteobacteria</taxon>
        <taxon>Hyphomicrobiales</taxon>
        <taxon>Nitrobacteraceae</taxon>
        <taxon>Rhodopseudomonas</taxon>
    </lineage>
</organism>
<evidence type="ECO:0000255" key="1">
    <source>
        <dbReference type="HAMAP-Rule" id="MF_01365"/>
    </source>
</evidence>
<evidence type="ECO:0000305" key="2"/>
<gene>
    <name evidence="1" type="primary">rplF</name>
    <name type="ordered locus">RPB_2310</name>
</gene>
<feature type="chain" id="PRO_0000260930" description="Large ribosomal subunit protein uL6">
    <location>
        <begin position="1"/>
        <end position="177"/>
    </location>
</feature>
<dbReference type="EMBL" id="CP000250">
    <property type="protein sequence ID" value="ABD07015.1"/>
    <property type="molecule type" value="Genomic_DNA"/>
</dbReference>
<dbReference type="RefSeq" id="WP_011441200.1">
    <property type="nucleotide sequence ID" value="NC_007778.1"/>
</dbReference>
<dbReference type="SMR" id="Q2IXP5"/>
<dbReference type="STRING" id="316058.RPB_2310"/>
<dbReference type="KEGG" id="rpb:RPB_2310"/>
<dbReference type="eggNOG" id="COG0097">
    <property type="taxonomic scope" value="Bacteria"/>
</dbReference>
<dbReference type="HOGENOM" id="CLU_065464_1_2_5"/>
<dbReference type="OrthoDB" id="9805007at2"/>
<dbReference type="Proteomes" id="UP000008809">
    <property type="component" value="Chromosome"/>
</dbReference>
<dbReference type="GO" id="GO:0022625">
    <property type="term" value="C:cytosolic large ribosomal subunit"/>
    <property type="evidence" value="ECO:0007669"/>
    <property type="project" value="TreeGrafter"/>
</dbReference>
<dbReference type="GO" id="GO:0019843">
    <property type="term" value="F:rRNA binding"/>
    <property type="evidence" value="ECO:0007669"/>
    <property type="project" value="UniProtKB-UniRule"/>
</dbReference>
<dbReference type="GO" id="GO:0003735">
    <property type="term" value="F:structural constituent of ribosome"/>
    <property type="evidence" value="ECO:0007669"/>
    <property type="project" value="InterPro"/>
</dbReference>
<dbReference type="GO" id="GO:0002181">
    <property type="term" value="P:cytoplasmic translation"/>
    <property type="evidence" value="ECO:0007669"/>
    <property type="project" value="TreeGrafter"/>
</dbReference>
<dbReference type="FunFam" id="3.90.930.12:FF:000001">
    <property type="entry name" value="50S ribosomal protein L6"/>
    <property type="match status" value="1"/>
</dbReference>
<dbReference type="FunFam" id="3.90.930.12:FF:000002">
    <property type="entry name" value="50S ribosomal protein L6"/>
    <property type="match status" value="1"/>
</dbReference>
<dbReference type="Gene3D" id="3.90.930.12">
    <property type="entry name" value="Ribosomal protein L6, alpha-beta domain"/>
    <property type="match status" value="2"/>
</dbReference>
<dbReference type="HAMAP" id="MF_01365_B">
    <property type="entry name" value="Ribosomal_uL6_B"/>
    <property type="match status" value="1"/>
</dbReference>
<dbReference type="InterPro" id="IPR000702">
    <property type="entry name" value="Ribosomal_uL6-like"/>
</dbReference>
<dbReference type="InterPro" id="IPR036789">
    <property type="entry name" value="Ribosomal_uL6-like_a/b-dom_sf"/>
</dbReference>
<dbReference type="InterPro" id="IPR020040">
    <property type="entry name" value="Ribosomal_uL6_a/b-dom"/>
</dbReference>
<dbReference type="InterPro" id="IPR019906">
    <property type="entry name" value="Ribosomal_uL6_bac-type"/>
</dbReference>
<dbReference type="InterPro" id="IPR002358">
    <property type="entry name" value="Ribosomal_uL6_CS"/>
</dbReference>
<dbReference type="NCBIfam" id="TIGR03654">
    <property type="entry name" value="L6_bact"/>
    <property type="match status" value="1"/>
</dbReference>
<dbReference type="PANTHER" id="PTHR11655">
    <property type="entry name" value="60S/50S RIBOSOMAL PROTEIN L6/L9"/>
    <property type="match status" value="1"/>
</dbReference>
<dbReference type="PANTHER" id="PTHR11655:SF14">
    <property type="entry name" value="LARGE RIBOSOMAL SUBUNIT PROTEIN UL6M"/>
    <property type="match status" value="1"/>
</dbReference>
<dbReference type="Pfam" id="PF00347">
    <property type="entry name" value="Ribosomal_L6"/>
    <property type="match status" value="2"/>
</dbReference>
<dbReference type="PIRSF" id="PIRSF002162">
    <property type="entry name" value="Ribosomal_L6"/>
    <property type="match status" value="1"/>
</dbReference>
<dbReference type="PRINTS" id="PR00059">
    <property type="entry name" value="RIBOSOMALL6"/>
</dbReference>
<dbReference type="SUPFAM" id="SSF56053">
    <property type="entry name" value="Ribosomal protein L6"/>
    <property type="match status" value="2"/>
</dbReference>
<dbReference type="PROSITE" id="PS00525">
    <property type="entry name" value="RIBOSOMAL_L6_1"/>
    <property type="match status" value="1"/>
</dbReference>